<gene>
    <name evidence="1" type="primary">rplD</name>
    <name type="ordered locus">Fnod_1137</name>
</gene>
<keyword id="KW-1185">Reference proteome</keyword>
<keyword id="KW-0687">Ribonucleoprotein</keyword>
<keyword id="KW-0689">Ribosomal protein</keyword>
<keyword id="KW-0694">RNA-binding</keyword>
<keyword id="KW-0699">rRNA-binding</keyword>
<protein>
    <recommendedName>
        <fullName evidence="1">Large ribosomal subunit protein uL4</fullName>
    </recommendedName>
    <alternativeName>
        <fullName evidence="3">50S ribosomal protein L4</fullName>
    </alternativeName>
</protein>
<comment type="function">
    <text evidence="1">One of the primary rRNA binding proteins, this protein initially binds near the 5'-end of the 23S rRNA. It is important during the early stages of 50S assembly. It makes multiple contacts with different domains of the 23S rRNA in the assembled 50S subunit and ribosome.</text>
</comment>
<comment type="function">
    <text evidence="1">Forms part of the polypeptide exit tunnel.</text>
</comment>
<comment type="subunit">
    <text evidence="1">Part of the 50S ribosomal subunit.</text>
</comment>
<comment type="similarity">
    <text evidence="1">Belongs to the universal ribosomal protein uL4 family.</text>
</comment>
<dbReference type="EMBL" id="CP000771">
    <property type="protein sequence ID" value="ABS60984.1"/>
    <property type="molecule type" value="Genomic_DNA"/>
</dbReference>
<dbReference type="RefSeq" id="WP_011994297.1">
    <property type="nucleotide sequence ID" value="NC_009718.1"/>
</dbReference>
<dbReference type="SMR" id="A7HM51"/>
<dbReference type="STRING" id="381764.Fnod_1137"/>
<dbReference type="KEGG" id="fno:Fnod_1137"/>
<dbReference type="eggNOG" id="COG0088">
    <property type="taxonomic scope" value="Bacteria"/>
</dbReference>
<dbReference type="HOGENOM" id="CLU_041575_5_2_0"/>
<dbReference type="OrthoDB" id="9803201at2"/>
<dbReference type="Proteomes" id="UP000002415">
    <property type="component" value="Chromosome"/>
</dbReference>
<dbReference type="GO" id="GO:1990904">
    <property type="term" value="C:ribonucleoprotein complex"/>
    <property type="evidence" value="ECO:0007669"/>
    <property type="project" value="UniProtKB-KW"/>
</dbReference>
<dbReference type="GO" id="GO:0005840">
    <property type="term" value="C:ribosome"/>
    <property type="evidence" value="ECO:0007669"/>
    <property type="project" value="UniProtKB-KW"/>
</dbReference>
<dbReference type="GO" id="GO:0019843">
    <property type="term" value="F:rRNA binding"/>
    <property type="evidence" value="ECO:0007669"/>
    <property type="project" value="UniProtKB-UniRule"/>
</dbReference>
<dbReference type="GO" id="GO:0003735">
    <property type="term" value="F:structural constituent of ribosome"/>
    <property type="evidence" value="ECO:0007669"/>
    <property type="project" value="InterPro"/>
</dbReference>
<dbReference type="GO" id="GO:0006412">
    <property type="term" value="P:translation"/>
    <property type="evidence" value="ECO:0007669"/>
    <property type="project" value="UniProtKB-UniRule"/>
</dbReference>
<dbReference type="Gene3D" id="3.40.1370.10">
    <property type="match status" value="1"/>
</dbReference>
<dbReference type="HAMAP" id="MF_01328_B">
    <property type="entry name" value="Ribosomal_uL4_B"/>
    <property type="match status" value="1"/>
</dbReference>
<dbReference type="InterPro" id="IPR002136">
    <property type="entry name" value="Ribosomal_uL4"/>
</dbReference>
<dbReference type="InterPro" id="IPR013005">
    <property type="entry name" value="Ribosomal_uL4-like"/>
</dbReference>
<dbReference type="InterPro" id="IPR023574">
    <property type="entry name" value="Ribosomal_uL4_dom_sf"/>
</dbReference>
<dbReference type="NCBIfam" id="TIGR03953">
    <property type="entry name" value="rplD_bact"/>
    <property type="match status" value="1"/>
</dbReference>
<dbReference type="PANTHER" id="PTHR10746">
    <property type="entry name" value="50S RIBOSOMAL PROTEIN L4"/>
    <property type="match status" value="1"/>
</dbReference>
<dbReference type="PANTHER" id="PTHR10746:SF6">
    <property type="entry name" value="LARGE RIBOSOMAL SUBUNIT PROTEIN UL4M"/>
    <property type="match status" value="1"/>
</dbReference>
<dbReference type="Pfam" id="PF00573">
    <property type="entry name" value="Ribosomal_L4"/>
    <property type="match status" value="1"/>
</dbReference>
<dbReference type="SUPFAM" id="SSF52166">
    <property type="entry name" value="Ribosomal protein L4"/>
    <property type="match status" value="1"/>
</dbReference>
<sequence>MAQVTLYNIKGEKIGNIEIADEVFNVEPNLDVMWRYIDMQLTNSRAGTASTKTRGEVAGGGRKPWPQKHTGRARQGSIRAIHWRHGGVAHGPKPRNYLKRLNKKMKKLALKSALSARFQEGNLIVVSDIRFEKAQTKQMREVLKNLGIADEKVLFVLPRKEEVYENVKLSGRNIPGVKVIIADNPNNGNPVNIDGLNVYDIINSSKVVLTEGTVRKIEEVLSK</sequence>
<organism>
    <name type="scientific">Fervidobacterium nodosum (strain ATCC 35602 / DSM 5306 / Rt17-B1)</name>
    <dbReference type="NCBI Taxonomy" id="381764"/>
    <lineage>
        <taxon>Bacteria</taxon>
        <taxon>Thermotogati</taxon>
        <taxon>Thermotogota</taxon>
        <taxon>Thermotogae</taxon>
        <taxon>Thermotogales</taxon>
        <taxon>Fervidobacteriaceae</taxon>
        <taxon>Fervidobacterium</taxon>
    </lineage>
</organism>
<feature type="chain" id="PRO_1000073269" description="Large ribosomal subunit protein uL4">
    <location>
        <begin position="1"/>
        <end position="223"/>
    </location>
</feature>
<feature type="region of interest" description="Disordered" evidence="2">
    <location>
        <begin position="47"/>
        <end position="72"/>
    </location>
</feature>
<evidence type="ECO:0000255" key="1">
    <source>
        <dbReference type="HAMAP-Rule" id="MF_01328"/>
    </source>
</evidence>
<evidence type="ECO:0000256" key="2">
    <source>
        <dbReference type="SAM" id="MobiDB-lite"/>
    </source>
</evidence>
<evidence type="ECO:0000305" key="3"/>
<accession>A7HM51</accession>
<name>RL4_FERNB</name>
<reference key="1">
    <citation type="submission" date="2007-07" db="EMBL/GenBank/DDBJ databases">
        <title>Complete sequence of Fervidobacterium nodosum Rt17-B1.</title>
        <authorList>
            <consortium name="US DOE Joint Genome Institute"/>
            <person name="Copeland A."/>
            <person name="Lucas S."/>
            <person name="Lapidus A."/>
            <person name="Barry K."/>
            <person name="Glavina del Rio T."/>
            <person name="Dalin E."/>
            <person name="Tice H."/>
            <person name="Pitluck S."/>
            <person name="Saunders E."/>
            <person name="Brettin T."/>
            <person name="Bruce D."/>
            <person name="Detter J.C."/>
            <person name="Han C."/>
            <person name="Schmutz J."/>
            <person name="Larimer F."/>
            <person name="Land M."/>
            <person name="Hauser L."/>
            <person name="Kyrpides N."/>
            <person name="Mikhailova N."/>
            <person name="Nelson K."/>
            <person name="Gogarten J.P."/>
            <person name="Noll K."/>
            <person name="Richardson P."/>
        </authorList>
    </citation>
    <scope>NUCLEOTIDE SEQUENCE [LARGE SCALE GENOMIC DNA]</scope>
    <source>
        <strain>ATCC 35602 / DSM 5306 / Rt17-B1</strain>
    </source>
</reference>
<proteinExistence type="inferred from homology"/>